<proteinExistence type="inferred from homology"/>
<protein>
    <recommendedName>
        <fullName evidence="1">Serine--tRNA ligase</fullName>
        <ecNumber evidence="1">6.1.1.11</ecNumber>
    </recommendedName>
    <alternativeName>
        <fullName evidence="1">Seryl-tRNA synthetase</fullName>
        <shortName evidence="1">SerRS</shortName>
    </alternativeName>
    <alternativeName>
        <fullName evidence="1">Seryl-tRNA(Ser/Sec) synthetase</fullName>
    </alternativeName>
</protein>
<evidence type="ECO:0000255" key="1">
    <source>
        <dbReference type="HAMAP-Rule" id="MF_00176"/>
    </source>
</evidence>
<comment type="function">
    <text evidence="1">Catalyzes the attachment of serine to tRNA(Ser). Is also able to aminoacylate tRNA(Sec) with serine, to form the misacylated tRNA L-seryl-tRNA(Sec), which will be further converted into selenocysteinyl-tRNA(Sec).</text>
</comment>
<comment type="catalytic activity">
    <reaction evidence="1">
        <text>tRNA(Ser) + L-serine + ATP = L-seryl-tRNA(Ser) + AMP + diphosphate + H(+)</text>
        <dbReference type="Rhea" id="RHEA:12292"/>
        <dbReference type="Rhea" id="RHEA-COMP:9669"/>
        <dbReference type="Rhea" id="RHEA-COMP:9703"/>
        <dbReference type="ChEBI" id="CHEBI:15378"/>
        <dbReference type="ChEBI" id="CHEBI:30616"/>
        <dbReference type="ChEBI" id="CHEBI:33019"/>
        <dbReference type="ChEBI" id="CHEBI:33384"/>
        <dbReference type="ChEBI" id="CHEBI:78442"/>
        <dbReference type="ChEBI" id="CHEBI:78533"/>
        <dbReference type="ChEBI" id="CHEBI:456215"/>
        <dbReference type="EC" id="6.1.1.11"/>
    </reaction>
</comment>
<comment type="catalytic activity">
    <reaction evidence="1">
        <text>tRNA(Sec) + L-serine + ATP = L-seryl-tRNA(Sec) + AMP + diphosphate + H(+)</text>
        <dbReference type="Rhea" id="RHEA:42580"/>
        <dbReference type="Rhea" id="RHEA-COMP:9742"/>
        <dbReference type="Rhea" id="RHEA-COMP:10128"/>
        <dbReference type="ChEBI" id="CHEBI:15378"/>
        <dbReference type="ChEBI" id="CHEBI:30616"/>
        <dbReference type="ChEBI" id="CHEBI:33019"/>
        <dbReference type="ChEBI" id="CHEBI:33384"/>
        <dbReference type="ChEBI" id="CHEBI:78442"/>
        <dbReference type="ChEBI" id="CHEBI:78533"/>
        <dbReference type="ChEBI" id="CHEBI:456215"/>
        <dbReference type="EC" id="6.1.1.11"/>
    </reaction>
</comment>
<comment type="pathway">
    <text evidence="1">Aminoacyl-tRNA biosynthesis; selenocysteinyl-tRNA(Sec) biosynthesis; L-seryl-tRNA(Sec) from L-serine and tRNA(Sec): step 1/1.</text>
</comment>
<comment type="subunit">
    <text evidence="1">Homodimer. The tRNA molecule binds across the dimer.</text>
</comment>
<comment type="subcellular location">
    <subcellularLocation>
        <location evidence="1">Cytoplasm</location>
    </subcellularLocation>
</comment>
<comment type="domain">
    <text evidence="1">Consists of two distinct domains, a catalytic core and a N-terminal extension that is involved in tRNA binding.</text>
</comment>
<comment type="similarity">
    <text evidence="1">Belongs to the class-II aminoacyl-tRNA synthetase family. Type-1 seryl-tRNA synthetase subfamily.</text>
</comment>
<reference key="1">
    <citation type="journal article" date="2007" name="Proc. Natl. Acad. Sci. U.S.A.">
        <title>Deep-sea vent epsilon-proteobacterial genomes provide insights into emergence of pathogens.</title>
        <authorList>
            <person name="Nakagawa S."/>
            <person name="Takaki Y."/>
            <person name="Shimamura S."/>
            <person name="Reysenbach A.-L."/>
            <person name="Takai K."/>
            <person name="Horikoshi K."/>
        </authorList>
    </citation>
    <scope>NUCLEOTIDE SEQUENCE [LARGE SCALE GENOMIC DNA]</scope>
    <source>
        <strain>NBC37-1</strain>
    </source>
</reference>
<keyword id="KW-0030">Aminoacyl-tRNA synthetase</keyword>
<keyword id="KW-0067">ATP-binding</keyword>
<keyword id="KW-0963">Cytoplasm</keyword>
<keyword id="KW-0436">Ligase</keyword>
<keyword id="KW-0547">Nucleotide-binding</keyword>
<keyword id="KW-0648">Protein biosynthesis</keyword>
<sequence>MIDLKYLQNNFNEVSMKLQKKGVDAASLEHLQTLFKTLKEANAKLEAAKAEQNSMSKLFGQYKREGKDITELKAKVDANKEAMVPLQEAAREAEEALYAVALAIPNLPDDSVPEGADEEDNVELIKVLEPRSFDFEPKEHWDLAEKNGWIDFERGVKLAKSRFSVLRGDAARLERALINFFLDTNRERGFEEFCVPFMNNAAMLQGTGQLPKFEDDLFKIEDEDLYLIPTAEVPLTNMYHDEILAEIDLPVLMTGYTPCFRKEAGSAGRDTRGMIRQHQFDKVEMVAIAHPDNSDEVFDMMVQNASDILTALGLPHRVVELCGGDLGFSAAKTIDLEVWLPGQNKYREISSISNTRDFQARRAKIRFKDGKKNRLVHTLNGSALAVGRTLIAIMENYQNEDGTIEIPEVLKKYM</sequence>
<gene>
    <name evidence="1" type="primary">serS</name>
    <name type="ordered locus">SUN_1957</name>
</gene>
<organism>
    <name type="scientific">Sulfurovum sp. (strain NBC37-1)</name>
    <dbReference type="NCBI Taxonomy" id="387093"/>
    <lineage>
        <taxon>Bacteria</taxon>
        <taxon>Pseudomonadati</taxon>
        <taxon>Campylobacterota</taxon>
        <taxon>Epsilonproteobacteria</taxon>
        <taxon>Campylobacterales</taxon>
        <taxon>Sulfurovaceae</taxon>
        <taxon>Sulfurovum</taxon>
    </lineage>
</organism>
<feature type="chain" id="PRO_1000019845" description="Serine--tRNA ligase">
    <location>
        <begin position="1"/>
        <end position="414"/>
    </location>
</feature>
<feature type="binding site" evidence="1">
    <location>
        <begin position="230"/>
        <end position="232"/>
    </location>
    <ligand>
        <name>L-serine</name>
        <dbReference type="ChEBI" id="CHEBI:33384"/>
    </ligand>
</feature>
<feature type="binding site" evidence="1">
    <location>
        <begin position="261"/>
        <end position="263"/>
    </location>
    <ligand>
        <name>ATP</name>
        <dbReference type="ChEBI" id="CHEBI:30616"/>
    </ligand>
</feature>
<feature type="binding site" evidence="1">
    <location>
        <position position="284"/>
    </location>
    <ligand>
        <name>L-serine</name>
        <dbReference type="ChEBI" id="CHEBI:33384"/>
    </ligand>
</feature>
<feature type="binding site" evidence="1">
    <location>
        <begin position="348"/>
        <end position="351"/>
    </location>
    <ligand>
        <name>ATP</name>
        <dbReference type="ChEBI" id="CHEBI:30616"/>
    </ligand>
</feature>
<feature type="binding site" evidence="1">
    <location>
        <position position="382"/>
    </location>
    <ligand>
        <name>L-serine</name>
        <dbReference type="ChEBI" id="CHEBI:33384"/>
    </ligand>
</feature>
<accession>A6QBP2</accession>
<name>SYS_SULNB</name>
<dbReference type="EC" id="6.1.1.11" evidence="1"/>
<dbReference type="EMBL" id="AP009179">
    <property type="protein sequence ID" value="BAF72901.1"/>
    <property type="molecule type" value="Genomic_DNA"/>
</dbReference>
<dbReference type="RefSeq" id="WP_012083721.1">
    <property type="nucleotide sequence ID" value="NC_009663.1"/>
</dbReference>
<dbReference type="SMR" id="A6QBP2"/>
<dbReference type="STRING" id="387093.SUN_1957"/>
<dbReference type="KEGG" id="sun:SUN_1957"/>
<dbReference type="eggNOG" id="COG0172">
    <property type="taxonomic scope" value="Bacteria"/>
</dbReference>
<dbReference type="HOGENOM" id="CLU_023797_1_1_7"/>
<dbReference type="OrthoDB" id="9804647at2"/>
<dbReference type="UniPathway" id="UPA00906">
    <property type="reaction ID" value="UER00895"/>
</dbReference>
<dbReference type="Proteomes" id="UP000006378">
    <property type="component" value="Chromosome"/>
</dbReference>
<dbReference type="GO" id="GO:0005737">
    <property type="term" value="C:cytoplasm"/>
    <property type="evidence" value="ECO:0007669"/>
    <property type="project" value="UniProtKB-SubCell"/>
</dbReference>
<dbReference type="GO" id="GO:0005524">
    <property type="term" value="F:ATP binding"/>
    <property type="evidence" value="ECO:0007669"/>
    <property type="project" value="UniProtKB-UniRule"/>
</dbReference>
<dbReference type="GO" id="GO:0004828">
    <property type="term" value="F:serine-tRNA ligase activity"/>
    <property type="evidence" value="ECO:0007669"/>
    <property type="project" value="UniProtKB-UniRule"/>
</dbReference>
<dbReference type="GO" id="GO:0016260">
    <property type="term" value="P:selenocysteine biosynthetic process"/>
    <property type="evidence" value="ECO:0007669"/>
    <property type="project" value="UniProtKB-UniRule"/>
</dbReference>
<dbReference type="GO" id="GO:0006434">
    <property type="term" value="P:seryl-tRNA aminoacylation"/>
    <property type="evidence" value="ECO:0007669"/>
    <property type="project" value="UniProtKB-UniRule"/>
</dbReference>
<dbReference type="CDD" id="cd00770">
    <property type="entry name" value="SerRS_core"/>
    <property type="match status" value="1"/>
</dbReference>
<dbReference type="Gene3D" id="3.30.930.10">
    <property type="entry name" value="Bira Bifunctional Protein, Domain 2"/>
    <property type="match status" value="1"/>
</dbReference>
<dbReference type="Gene3D" id="1.10.287.40">
    <property type="entry name" value="Serine-tRNA synthetase, tRNA binding domain"/>
    <property type="match status" value="1"/>
</dbReference>
<dbReference type="HAMAP" id="MF_00176">
    <property type="entry name" value="Ser_tRNA_synth_type1"/>
    <property type="match status" value="1"/>
</dbReference>
<dbReference type="InterPro" id="IPR002314">
    <property type="entry name" value="aa-tRNA-synt_IIb"/>
</dbReference>
<dbReference type="InterPro" id="IPR006195">
    <property type="entry name" value="aa-tRNA-synth_II"/>
</dbReference>
<dbReference type="InterPro" id="IPR045864">
    <property type="entry name" value="aa-tRNA-synth_II/BPL/LPL"/>
</dbReference>
<dbReference type="InterPro" id="IPR002317">
    <property type="entry name" value="Ser-tRNA-ligase_type_1"/>
</dbReference>
<dbReference type="InterPro" id="IPR015866">
    <property type="entry name" value="Ser-tRNA-synth_1_N"/>
</dbReference>
<dbReference type="InterPro" id="IPR042103">
    <property type="entry name" value="SerRS_1_N_sf"/>
</dbReference>
<dbReference type="InterPro" id="IPR033729">
    <property type="entry name" value="SerRS_core"/>
</dbReference>
<dbReference type="InterPro" id="IPR010978">
    <property type="entry name" value="tRNA-bd_arm"/>
</dbReference>
<dbReference type="NCBIfam" id="TIGR00414">
    <property type="entry name" value="serS"/>
    <property type="match status" value="1"/>
</dbReference>
<dbReference type="PANTHER" id="PTHR43697:SF1">
    <property type="entry name" value="SERINE--TRNA LIGASE"/>
    <property type="match status" value="1"/>
</dbReference>
<dbReference type="PANTHER" id="PTHR43697">
    <property type="entry name" value="SERYL-TRNA SYNTHETASE"/>
    <property type="match status" value="1"/>
</dbReference>
<dbReference type="Pfam" id="PF02403">
    <property type="entry name" value="Seryl_tRNA_N"/>
    <property type="match status" value="1"/>
</dbReference>
<dbReference type="Pfam" id="PF00587">
    <property type="entry name" value="tRNA-synt_2b"/>
    <property type="match status" value="1"/>
</dbReference>
<dbReference type="PIRSF" id="PIRSF001529">
    <property type="entry name" value="Ser-tRNA-synth_IIa"/>
    <property type="match status" value="1"/>
</dbReference>
<dbReference type="PRINTS" id="PR00981">
    <property type="entry name" value="TRNASYNTHSER"/>
</dbReference>
<dbReference type="SUPFAM" id="SSF55681">
    <property type="entry name" value="Class II aaRS and biotin synthetases"/>
    <property type="match status" value="1"/>
</dbReference>
<dbReference type="SUPFAM" id="SSF46589">
    <property type="entry name" value="tRNA-binding arm"/>
    <property type="match status" value="1"/>
</dbReference>
<dbReference type="PROSITE" id="PS50862">
    <property type="entry name" value="AA_TRNA_LIGASE_II"/>
    <property type="match status" value="1"/>
</dbReference>